<proteinExistence type="inferred from homology"/>
<organism>
    <name type="scientific">Actinobacillus pleuropneumoniae serotype 3 (strain JL03)</name>
    <dbReference type="NCBI Taxonomy" id="434271"/>
    <lineage>
        <taxon>Bacteria</taxon>
        <taxon>Pseudomonadati</taxon>
        <taxon>Pseudomonadota</taxon>
        <taxon>Gammaproteobacteria</taxon>
        <taxon>Pasteurellales</taxon>
        <taxon>Pasteurellaceae</taxon>
        <taxon>Actinobacillus</taxon>
    </lineage>
</organism>
<evidence type="ECO:0000255" key="1">
    <source>
        <dbReference type="HAMAP-Rule" id="MF_00049"/>
    </source>
</evidence>
<protein>
    <recommendedName>
        <fullName evidence="1">Leucine--tRNA ligase</fullName>
        <ecNumber evidence="1">6.1.1.4</ecNumber>
    </recommendedName>
    <alternativeName>
        <fullName evidence="1">Leucyl-tRNA synthetase</fullName>
        <shortName evidence="1">LeuRS</shortName>
    </alternativeName>
</protein>
<feature type="chain" id="PRO_1000091283" description="Leucine--tRNA ligase">
    <location>
        <begin position="1"/>
        <end position="861"/>
    </location>
</feature>
<feature type="short sequence motif" description="'HIGH' region">
    <location>
        <begin position="42"/>
        <end position="52"/>
    </location>
</feature>
<feature type="short sequence motif" description="'KMSKS' region">
    <location>
        <begin position="619"/>
        <end position="623"/>
    </location>
</feature>
<feature type="binding site" evidence="1">
    <location>
        <position position="622"/>
    </location>
    <ligand>
        <name>ATP</name>
        <dbReference type="ChEBI" id="CHEBI:30616"/>
    </ligand>
</feature>
<accession>B0BPF7</accession>
<name>SYL_ACTPJ</name>
<dbReference type="EC" id="6.1.1.4" evidence="1"/>
<dbReference type="EMBL" id="CP000687">
    <property type="protein sequence ID" value="ABY69442.1"/>
    <property type="molecule type" value="Genomic_DNA"/>
</dbReference>
<dbReference type="RefSeq" id="WP_005601197.1">
    <property type="nucleotide sequence ID" value="NC_010278.1"/>
</dbReference>
<dbReference type="SMR" id="B0BPF7"/>
<dbReference type="KEGG" id="apj:APJL_0884"/>
<dbReference type="HOGENOM" id="CLU_004427_0_0_6"/>
<dbReference type="Proteomes" id="UP000008547">
    <property type="component" value="Chromosome"/>
</dbReference>
<dbReference type="GO" id="GO:0005829">
    <property type="term" value="C:cytosol"/>
    <property type="evidence" value="ECO:0007669"/>
    <property type="project" value="TreeGrafter"/>
</dbReference>
<dbReference type="GO" id="GO:0002161">
    <property type="term" value="F:aminoacyl-tRNA deacylase activity"/>
    <property type="evidence" value="ECO:0007669"/>
    <property type="project" value="InterPro"/>
</dbReference>
<dbReference type="GO" id="GO:0005524">
    <property type="term" value="F:ATP binding"/>
    <property type="evidence" value="ECO:0007669"/>
    <property type="project" value="UniProtKB-UniRule"/>
</dbReference>
<dbReference type="GO" id="GO:0004823">
    <property type="term" value="F:leucine-tRNA ligase activity"/>
    <property type="evidence" value="ECO:0007669"/>
    <property type="project" value="UniProtKB-UniRule"/>
</dbReference>
<dbReference type="GO" id="GO:0006429">
    <property type="term" value="P:leucyl-tRNA aminoacylation"/>
    <property type="evidence" value="ECO:0007669"/>
    <property type="project" value="UniProtKB-UniRule"/>
</dbReference>
<dbReference type="CDD" id="cd07958">
    <property type="entry name" value="Anticodon_Ia_Leu_BEm"/>
    <property type="match status" value="1"/>
</dbReference>
<dbReference type="CDD" id="cd00812">
    <property type="entry name" value="LeuRS_core"/>
    <property type="match status" value="1"/>
</dbReference>
<dbReference type="FunFam" id="1.10.730.10:FF:000002">
    <property type="entry name" value="Leucine--tRNA ligase"/>
    <property type="match status" value="1"/>
</dbReference>
<dbReference type="FunFam" id="2.20.28.290:FF:000001">
    <property type="entry name" value="Leucine--tRNA ligase"/>
    <property type="match status" value="1"/>
</dbReference>
<dbReference type="FunFam" id="3.40.50.620:FF:000003">
    <property type="entry name" value="Leucine--tRNA ligase"/>
    <property type="match status" value="1"/>
</dbReference>
<dbReference type="FunFam" id="3.40.50.620:FF:000051">
    <property type="entry name" value="Leucine--tRNA ligase"/>
    <property type="match status" value="1"/>
</dbReference>
<dbReference type="FunFam" id="3.90.740.10:FF:000012">
    <property type="entry name" value="Leucine--tRNA ligase"/>
    <property type="match status" value="1"/>
</dbReference>
<dbReference type="Gene3D" id="2.20.28.290">
    <property type="match status" value="1"/>
</dbReference>
<dbReference type="Gene3D" id="3.10.20.590">
    <property type="match status" value="1"/>
</dbReference>
<dbReference type="Gene3D" id="3.40.50.620">
    <property type="entry name" value="HUPs"/>
    <property type="match status" value="2"/>
</dbReference>
<dbReference type="Gene3D" id="1.10.730.10">
    <property type="entry name" value="Isoleucyl-tRNA Synthetase, Domain 1"/>
    <property type="match status" value="1"/>
</dbReference>
<dbReference type="HAMAP" id="MF_00049_B">
    <property type="entry name" value="Leu_tRNA_synth_B"/>
    <property type="match status" value="1"/>
</dbReference>
<dbReference type="InterPro" id="IPR001412">
    <property type="entry name" value="aa-tRNA-synth_I_CS"/>
</dbReference>
<dbReference type="InterPro" id="IPR002300">
    <property type="entry name" value="aa-tRNA-synth_Ia"/>
</dbReference>
<dbReference type="InterPro" id="IPR002302">
    <property type="entry name" value="Leu-tRNA-ligase"/>
</dbReference>
<dbReference type="InterPro" id="IPR025709">
    <property type="entry name" value="Leu_tRNA-synth_edit"/>
</dbReference>
<dbReference type="InterPro" id="IPR013155">
    <property type="entry name" value="M/V/L/I-tRNA-synth_anticd-bd"/>
</dbReference>
<dbReference type="InterPro" id="IPR015413">
    <property type="entry name" value="Methionyl/Leucyl_tRNA_Synth"/>
</dbReference>
<dbReference type="InterPro" id="IPR014729">
    <property type="entry name" value="Rossmann-like_a/b/a_fold"/>
</dbReference>
<dbReference type="InterPro" id="IPR009080">
    <property type="entry name" value="tRNAsynth_Ia_anticodon-bd"/>
</dbReference>
<dbReference type="InterPro" id="IPR009008">
    <property type="entry name" value="Val/Leu/Ile-tRNA-synth_edit"/>
</dbReference>
<dbReference type="NCBIfam" id="TIGR00396">
    <property type="entry name" value="leuS_bact"/>
    <property type="match status" value="1"/>
</dbReference>
<dbReference type="PANTHER" id="PTHR43740:SF2">
    <property type="entry name" value="LEUCINE--TRNA LIGASE, MITOCHONDRIAL"/>
    <property type="match status" value="1"/>
</dbReference>
<dbReference type="PANTHER" id="PTHR43740">
    <property type="entry name" value="LEUCYL-TRNA SYNTHETASE"/>
    <property type="match status" value="1"/>
</dbReference>
<dbReference type="Pfam" id="PF08264">
    <property type="entry name" value="Anticodon_1"/>
    <property type="match status" value="1"/>
</dbReference>
<dbReference type="Pfam" id="PF00133">
    <property type="entry name" value="tRNA-synt_1"/>
    <property type="match status" value="2"/>
</dbReference>
<dbReference type="Pfam" id="PF13603">
    <property type="entry name" value="tRNA-synt_1_2"/>
    <property type="match status" value="1"/>
</dbReference>
<dbReference type="Pfam" id="PF09334">
    <property type="entry name" value="tRNA-synt_1g"/>
    <property type="match status" value="1"/>
</dbReference>
<dbReference type="PRINTS" id="PR00985">
    <property type="entry name" value="TRNASYNTHLEU"/>
</dbReference>
<dbReference type="SUPFAM" id="SSF47323">
    <property type="entry name" value="Anticodon-binding domain of a subclass of class I aminoacyl-tRNA synthetases"/>
    <property type="match status" value="1"/>
</dbReference>
<dbReference type="SUPFAM" id="SSF52374">
    <property type="entry name" value="Nucleotidylyl transferase"/>
    <property type="match status" value="1"/>
</dbReference>
<dbReference type="SUPFAM" id="SSF50677">
    <property type="entry name" value="ValRS/IleRS/LeuRS editing domain"/>
    <property type="match status" value="1"/>
</dbReference>
<dbReference type="PROSITE" id="PS00178">
    <property type="entry name" value="AA_TRNA_LIGASE_I"/>
    <property type="match status" value="1"/>
</dbReference>
<sequence length="861" mass="97751">MQQQYNPSAIEPKVQQFWAENKVFKAVKDVTKEKYYCLSMLPYPSGKLHMGHVRNYTIGDVVSRYQRMIGKNVLQPMGWDAFGLPAEGAAVKNNTAPAKWTYENIEYMKGQLKMLGFSYDWDREVTTCRPEYYKWEQWFFTELYKKGLVYKKTSTVNWCPNDATVLANEQVHEGCCWRCDTPVEQREIPQWFIKITDYAEELLTHLDNLPQWPDQVKTMQRNWIGRSEGVEITFKIAGSNAELPVYTTRPDTFFGVSYVAIAAAHPLAEMAAENNPALAEFIREAKNTKVAEAELATMEKKGMATGLFAIHPLTGKEVPVWVANFVLMHYGTGAVMAVPAHDERDFEFAQKYGLQINQVIQPLDGSEWDFSKAAYTEHGKLINSAEFDDLNFEQAFNAIADKLESMKVGKRQVNFRLRDWGVSRQRYWGAPIPMMTTEDGEVVTVPMQDLPVILPEDVVMNGVQSPIKADPEWAKTTYNGKPALKETDTFDTFMESSWYYARYTCPQYHEGMLDSDEANYWLPVDQYIGGIEHATMHLLYFRFFHKLLRDAGILNSDEPATKLLCQGMVLADAFYYTSPTNERIWVSPTQVTLERDEKGRIIKATDPEGRELVHSGMTKMSKSKNNGIDPQEMVEKYGADTVRLFMMFASPAEMTLEWQESGVEGAKRFLGRVWNLVYEYSQNPATAALDVAALSKAQKELRRDVHKTIAKVSDDIGRRQTFNTAIAAIMELMNKLTKAPLENEQDKAVMAEALSAVVRMLYPITPHICFELWQALGNNDTIDFAPWVVADESAMVEDEKLVVVQVNGKVRGKVTVSATATEDEVKAIAKADANVAKFLEGVEIVKEIYVPYKMLSFAVKA</sequence>
<keyword id="KW-0030">Aminoacyl-tRNA synthetase</keyword>
<keyword id="KW-0067">ATP-binding</keyword>
<keyword id="KW-0963">Cytoplasm</keyword>
<keyword id="KW-0436">Ligase</keyword>
<keyword id="KW-0547">Nucleotide-binding</keyword>
<keyword id="KW-0648">Protein biosynthesis</keyword>
<reference key="1">
    <citation type="journal article" date="2008" name="PLoS ONE">
        <title>Genome biology of Actinobacillus pleuropneumoniae JL03, an isolate of serotype 3 prevalent in China.</title>
        <authorList>
            <person name="Xu Z."/>
            <person name="Zhou Y."/>
            <person name="Li L."/>
            <person name="Zhou R."/>
            <person name="Xiao S."/>
            <person name="Wan Y."/>
            <person name="Zhang S."/>
            <person name="Wang K."/>
            <person name="Li W."/>
            <person name="Li L."/>
            <person name="Jin H."/>
            <person name="Kang M."/>
            <person name="Dalai B."/>
            <person name="Li T."/>
            <person name="Liu L."/>
            <person name="Cheng Y."/>
            <person name="Zhang L."/>
            <person name="Xu T."/>
            <person name="Zheng H."/>
            <person name="Pu S."/>
            <person name="Wang B."/>
            <person name="Gu W."/>
            <person name="Zhang X.L."/>
            <person name="Zhu G.-F."/>
            <person name="Wang S."/>
            <person name="Zhao G.-P."/>
            <person name="Chen H."/>
        </authorList>
    </citation>
    <scope>NUCLEOTIDE SEQUENCE [LARGE SCALE GENOMIC DNA]</scope>
    <source>
        <strain>JL03</strain>
    </source>
</reference>
<gene>
    <name evidence="1" type="primary">leuS</name>
    <name type="ordered locus">APJL_0884</name>
</gene>
<comment type="catalytic activity">
    <reaction evidence="1">
        <text>tRNA(Leu) + L-leucine + ATP = L-leucyl-tRNA(Leu) + AMP + diphosphate</text>
        <dbReference type="Rhea" id="RHEA:11688"/>
        <dbReference type="Rhea" id="RHEA-COMP:9613"/>
        <dbReference type="Rhea" id="RHEA-COMP:9622"/>
        <dbReference type="ChEBI" id="CHEBI:30616"/>
        <dbReference type="ChEBI" id="CHEBI:33019"/>
        <dbReference type="ChEBI" id="CHEBI:57427"/>
        <dbReference type="ChEBI" id="CHEBI:78442"/>
        <dbReference type="ChEBI" id="CHEBI:78494"/>
        <dbReference type="ChEBI" id="CHEBI:456215"/>
        <dbReference type="EC" id="6.1.1.4"/>
    </reaction>
</comment>
<comment type="subcellular location">
    <subcellularLocation>
        <location evidence="1">Cytoplasm</location>
    </subcellularLocation>
</comment>
<comment type="similarity">
    <text evidence="1">Belongs to the class-I aminoacyl-tRNA synthetase family.</text>
</comment>